<feature type="chain" id="PRO_0000354218" description="Small ribosomal subunit protein uS15">
    <location>
        <begin position="1"/>
        <end position="78"/>
    </location>
</feature>
<keyword id="KW-0687">Ribonucleoprotein</keyword>
<keyword id="KW-0689">Ribosomal protein</keyword>
<keyword id="KW-0694">RNA-binding</keyword>
<keyword id="KW-0699">rRNA-binding</keyword>
<dbReference type="EMBL" id="CP000770">
    <property type="protein sequence ID" value="ABS30612.1"/>
    <property type="molecule type" value="Genomic_DNA"/>
</dbReference>
<dbReference type="SMR" id="A8Z661"/>
<dbReference type="STRING" id="444179.SMGWSS_215"/>
<dbReference type="KEGG" id="smg:SMGWSS_215"/>
<dbReference type="HOGENOM" id="CLU_148518_0_0_10"/>
<dbReference type="Proteomes" id="UP000000781">
    <property type="component" value="Chromosome"/>
</dbReference>
<dbReference type="GO" id="GO:0022627">
    <property type="term" value="C:cytosolic small ribosomal subunit"/>
    <property type="evidence" value="ECO:0007669"/>
    <property type="project" value="TreeGrafter"/>
</dbReference>
<dbReference type="GO" id="GO:0019843">
    <property type="term" value="F:rRNA binding"/>
    <property type="evidence" value="ECO:0007669"/>
    <property type="project" value="UniProtKB-UniRule"/>
</dbReference>
<dbReference type="GO" id="GO:0003735">
    <property type="term" value="F:structural constituent of ribosome"/>
    <property type="evidence" value="ECO:0007669"/>
    <property type="project" value="InterPro"/>
</dbReference>
<dbReference type="GO" id="GO:0006412">
    <property type="term" value="P:translation"/>
    <property type="evidence" value="ECO:0007669"/>
    <property type="project" value="UniProtKB-UniRule"/>
</dbReference>
<dbReference type="CDD" id="cd00353">
    <property type="entry name" value="Ribosomal_S15p_S13e"/>
    <property type="match status" value="1"/>
</dbReference>
<dbReference type="Gene3D" id="1.10.287.10">
    <property type="entry name" value="S15/NS1, RNA-binding"/>
    <property type="match status" value="1"/>
</dbReference>
<dbReference type="HAMAP" id="MF_01343_B">
    <property type="entry name" value="Ribosomal_uS15_B"/>
    <property type="match status" value="1"/>
</dbReference>
<dbReference type="InterPro" id="IPR000589">
    <property type="entry name" value="Ribosomal_uS15"/>
</dbReference>
<dbReference type="InterPro" id="IPR005290">
    <property type="entry name" value="Ribosomal_uS15_bac-type"/>
</dbReference>
<dbReference type="InterPro" id="IPR009068">
    <property type="entry name" value="uS15_NS1_RNA-bd_sf"/>
</dbReference>
<dbReference type="NCBIfam" id="TIGR00952">
    <property type="entry name" value="S15_bact"/>
    <property type="match status" value="1"/>
</dbReference>
<dbReference type="PANTHER" id="PTHR23321">
    <property type="entry name" value="RIBOSOMAL PROTEIN S15, BACTERIAL AND ORGANELLAR"/>
    <property type="match status" value="1"/>
</dbReference>
<dbReference type="PANTHER" id="PTHR23321:SF26">
    <property type="entry name" value="SMALL RIBOSOMAL SUBUNIT PROTEIN US15M"/>
    <property type="match status" value="1"/>
</dbReference>
<dbReference type="Pfam" id="PF00312">
    <property type="entry name" value="Ribosomal_S15"/>
    <property type="match status" value="1"/>
</dbReference>
<dbReference type="SMART" id="SM01387">
    <property type="entry name" value="Ribosomal_S15"/>
    <property type="match status" value="1"/>
</dbReference>
<dbReference type="SUPFAM" id="SSF47060">
    <property type="entry name" value="S15/NS1 RNA-binding domain"/>
    <property type="match status" value="1"/>
</dbReference>
<dbReference type="PROSITE" id="PS00362">
    <property type="entry name" value="RIBOSOMAL_S15"/>
    <property type="match status" value="1"/>
</dbReference>
<protein>
    <recommendedName>
        <fullName evidence="1">Small ribosomal subunit protein uS15</fullName>
    </recommendedName>
    <alternativeName>
        <fullName evidence="2">30S ribosomal protein S15</fullName>
    </alternativeName>
</protein>
<gene>
    <name evidence="1" type="primary">rpsO</name>
    <name type="ordered locus">SMGWSS_215</name>
</gene>
<accession>A8Z661</accession>
<name>RS15_KARMG</name>
<organism>
    <name type="scientific">Karelsulcia muelleri (strain GWSS)</name>
    <name type="common">Sulcia muelleri</name>
    <dbReference type="NCBI Taxonomy" id="444179"/>
    <lineage>
        <taxon>Bacteria</taxon>
        <taxon>Pseudomonadati</taxon>
        <taxon>Bacteroidota</taxon>
        <taxon>Flavobacteriia</taxon>
        <taxon>Flavobacteriales</taxon>
        <taxon>Candidatus Karelsulcia</taxon>
    </lineage>
</organism>
<reference key="1">
    <citation type="journal article" date="2007" name="Proc. Natl. Acad. Sci. U.S.A.">
        <title>Parallel genomic evolution and metabolic interdependence in an ancient symbiosis.</title>
        <authorList>
            <person name="McCutcheon J.P."/>
            <person name="Moran N.A."/>
        </authorList>
    </citation>
    <scope>NUCLEOTIDE SEQUENCE [LARGE SCALE GENOMIC DNA]</scope>
    <source>
        <strain>GWSS</strain>
    </source>
</reference>
<proteinExistence type="inferred from homology"/>
<sequence length="78" mass="9265">MYLNSNKKKLIIKNYGLSEYDTGNCIVQIALLTFKIKNITNHLKYNKKDFNTERSLQILVSKRKKLLKYIEKKNNTQL</sequence>
<evidence type="ECO:0000255" key="1">
    <source>
        <dbReference type="HAMAP-Rule" id="MF_01343"/>
    </source>
</evidence>
<evidence type="ECO:0000305" key="2"/>
<comment type="function">
    <text evidence="1">One of the primary rRNA binding proteins, it binds directly to 16S rRNA where it helps nucleate assembly of the platform of the 30S subunit by binding and bridging several RNA helices of the 16S rRNA.</text>
</comment>
<comment type="function">
    <text evidence="1">Forms an intersubunit bridge (bridge B4) with the 23S rRNA of the 50S subunit in the ribosome.</text>
</comment>
<comment type="subunit">
    <text evidence="1">Part of the 30S ribosomal subunit. Forms a bridge to the 50S subunit in the 70S ribosome, contacting the 23S rRNA.</text>
</comment>
<comment type="similarity">
    <text evidence="1">Belongs to the universal ribosomal protein uS15 family.</text>
</comment>